<dbReference type="EMBL" id="BC126629">
    <property type="protein sequence ID" value="AAI26630.1"/>
    <property type="molecule type" value="mRNA"/>
</dbReference>
<dbReference type="RefSeq" id="NP_001073731.1">
    <property type="nucleotide sequence ID" value="NM_001080262.1"/>
</dbReference>
<dbReference type="SMR" id="A1A4K3"/>
<dbReference type="FunCoup" id="A1A4K3">
    <property type="interactions" value="4099"/>
</dbReference>
<dbReference type="IntAct" id="A1A4K3">
    <property type="interactions" value="2"/>
</dbReference>
<dbReference type="STRING" id="9913.ENSBTAP00000028740"/>
<dbReference type="PaxDb" id="9913-ENSBTAP00000028740"/>
<dbReference type="PeptideAtlas" id="A1A4K3"/>
<dbReference type="GeneID" id="511951"/>
<dbReference type="KEGG" id="bta:511951"/>
<dbReference type="CTD" id="1642"/>
<dbReference type="eggNOG" id="KOG1897">
    <property type="taxonomic scope" value="Eukaryota"/>
</dbReference>
<dbReference type="HOGENOM" id="CLU_002893_0_1_1"/>
<dbReference type="InParanoid" id="A1A4K3"/>
<dbReference type="OrthoDB" id="433457at2759"/>
<dbReference type="TreeFam" id="TF105840"/>
<dbReference type="UniPathway" id="UPA00143"/>
<dbReference type="Proteomes" id="UP000009136">
    <property type="component" value="Unplaced"/>
</dbReference>
<dbReference type="GO" id="GO:0080008">
    <property type="term" value="C:Cul4-RING E3 ubiquitin ligase complex"/>
    <property type="evidence" value="ECO:0000250"/>
    <property type="project" value="UniProtKB"/>
</dbReference>
<dbReference type="GO" id="GO:0031464">
    <property type="term" value="C:Cul4A-RING E3 ubiquitin ligase complex"/>
    <property type="evidence" value="ECO:0000250"/>
    <property type="project" value="UniProtKB"/>
</dbReference>
<dbReference type="GO" id="GO:0031465">
    <property type="term" value="C:Cul4B-RING E3 ubiquitin ligase complex"/>
    <property type="evidence" value="ECO:0000250"/>
    <property type="project" value="UniProtKB"/>
</dbReference>
<dbReference type="GO" id="GO:0005737">
    <property type="term" value="C:cytoplasm"/>
    <property type="evidence" value="ECO:0000314"/>
    <property type="project" value="AgBase"/>
</dbReference>
<dbReference type="GO" id="GO:0005654">
    <property type="term" value="C:nucleoplasm"/>
    <property type="evidence" value="ECO:0000314"/>
    <property type="project" value="AgBase"/>
</dbReference>
<dbReference type="GO" id="GO:0005634">
    <property type="term" value="C:nucleus"/>
    <property type="evidence" value="ECO:0000314"/>
    <property type="project" value="AgBase"/>
</dbReference>
<dbReference type="GO" id="GO:0035861">
    <property type="term" value="C:site of double-strand break"/>
    <property type="evidence" value="ECO:0000318"/>
    <property type="project" value="GO_Central"/>
</dbReference>
<dbReference type="GO" id="GO:0003677">
    <property type="term" value="F:DNA binding"/>
    <property type="evidence" value="ECO:0007669"/>
    <property type="project" value="UniProtKB-KW"/>
</dbReference>
<dbReference type="GO" id="GO:0006281">
    <property type="term" value="P:DNA repair"/>
    <property type="evidence" value="ECO:0000318"/>
    <property type="project" value="GO_Central"/>
</dbReference>
<dbReference type="GO" id="GO:0045722">
    <property type="term" value="P:positive regulation of gluconeogenesis"/>
    <property type="evidence" value="ECO:0000250"/>
    <property type="project" value="UniProtKB"/>
</dbReference>
<dbReference type="GO" id="GO:0043161">
    <property type="term" value="P:proteasome-mediated ubiquitin-dependent protein catabolic process"/>
    <property type="evidence" value="ECO:0000250"/>
    <property type="project" value="UniProtKB"/>
</dbReference>
<dbReference type="GO" id="GO:0016567">
    <property type="term" value="P:protein ubiquitination"/>
    <property type="evidence" value="ECO:0000250"/>
    <property type="project" value="UniProtKB"/>
</dbReference>
<dbReference type="GO" id="GO:0042752">
    <property type="term" value="P:regulation of circadian rhythm"/>
    <property type="evidence" value="ECO:0000250"/>
    <property type="project" value="UniProtKB"/>
</dbReference>
<dbReference type="GO" id="GO:0048511">
    <property type="term" value="P:rhythmic process"/>
    <property type="evidence" value="ECO:0007669"/>
    <property type="project" value="UniProtKB-KW"/>
</dbReference>
<dbReference type="GO" id="GO:0006511">
    <property type="term" value="P:ubiquitin-dependent protein catabolic process"/>
    <property type="evidence" value="ECO:0000250"/>
    <property type="project" value="UniProtKB"/>
</dbReference>
<dbReference type="FunFam" id="1.10.150.910:FF:000001">
    <property type="entry name" value="DNA damage-binding protein 1"/>
    <property type="match status" value="1"/>
</dbReference>
<dbReference type="FunFam" id="2.130.10.10:FF:000073">
    <property type="entry name" value="DNA damage-binding protein 1"/>
    <property type="match status" value="1"/>
</dbReference>
<dbReference type="FunFam" id="2.130.10.10:FF:002576">
    <property type="entry name" value="DNA damage-binding protein 1"/>
    <property type="match status" value="1"/>
</dbReference>
<dbReference type="FunFam" id="2.130.10.10:FF:002484">
    <property type="entry name" value="DNA damage-binding protein 1 isoform X3"/>
    <property type="match status" value="1"/>
</dbReference>
<dbReference type="Gene3D" id="1.10.150.910">
    <property type="match status" value="1"/>
</dbReference>
<dbReference type="Gene3D" id="2.130.10.10">
    <property type="entry name" value="YVTN repeat-like/Quinoprotein amine dehydrogenase"/>
    <property type="match status" value="3"/>
</dbReference>
<dbReference type="InterPro" id="IPR018846">
    <property type="entry name" value="Beta-prop_RSE1/DDB1/CPSF1_1st"/>
</dbReference>
<dbReference type="InterPro" id="IPR004871">
    <property type="entry name" value="Cleavage/polyA-sp_fac_asu_C"/>
</dbReference>
<dbReference type="InterPro" id="IPR011047">
    <property type="entry name" value="Quinoprotein_ADH-like_sf"/>
</dbReference>
<dbReference type="InterPro" id="IPR050358">
    <property type="entry name" value="RSE1/DDB1/CFT1/CPSF1"/>
</dbReference>
<dbReference type="InterPro" id="IPR015943">
    <property type="entry name" value="WD40/YVTN_repeat-like_dom_sf"/>
</dbReference>
<dbReference type="PANTHER" id="PTHR10644">
    <property type="entry name" value="DNA REPAIR/RNA PROCESSING CPSF FAMILY"/>
    <property type="match status" value="1"/>
</dbReference>
<dbReference type="Pfam" id="PF10433">
    <property type="entry name" value="Beta-prop_RSE1_1st"/>
    <property type="match status" value="1"/>
</dbReference>
<dbReference type="Pfam" id="PF23726">
    <property type="entry name" value="Beta-prop_RSE1_2nd"/>
    <property type="match status" value="1"/>
</dbReference>
<dbReference type="Pfam" id="PF03178">
    <property type="entry name" value="CPSF_A"/>
    <property type="match status" value="1"/>
</dbReference>
<dbReference type="SUPFAM" id="SSF50998">
    <property type="entry name" value="Quinoprotein alcohol dehydrogenase-like"/>
    <property type="match status" value="1"/>
</dbReference>
<evidence type="ECO:0000250" key="1"/>
<evidence type="ECO:0000250" key="2">
    <source>
        <dbReference type="UniProtKB" id="Q16531"/>
    </source>
</evidence>
<evidence type="ECO:0000250" key="3">
    <source>
        <dbReference type="UniProtKB" id="Q3U1J4"/>
    </source>
</evidence>
<evidence type="ECO:0000250" key="4">
    <source>
        <dbReference type="UniProtKB" id="Q9ESW0"/>
    </source>
</evidence>
<evidence type="ECO:0000305" key="5"/>
<gene>
    <name type="primary">DDB1</name>
</gene>
<keyword id="KW-0007">Acetylation</keyword>
<keyword id="KW-0090">Biological rhythms</keyword>
<keyword id="KW-0963">Cytoplasm</keyword>
<keyword id="KW-0227">DNA damage</keyword>
<keyword id="KW-0234">DNA repair</keyword>
<keyword id="KW-0238">DNA-binding</keyword>
<keyword id="KW-1017">Isopeptide bond</keyword>
<keyword id="KW-0539">Nucleus</keyword>
<keyword id="KW-0597">Phosphoprotein</keyword>
<keyword id="KW-1185">Reference proteome</keyword>
<keyword id="KW-0677">Repeat</keyword>
<keyword id="KW-0832">Ubl conjugation</keyword>
<keyword id="KW-0833">Ubl conjugation pathway</keyword>
<name>DDB1_BOVIN</name>
<comment type="function">
    <text evidence="2 3">Protein, which is both involved in DNA repair and protein ubiquitination, as part of the UV-DDB complex and DCX (DDB1-CUL4-X-box) complexes, respectively. Core component of the UV-DDB complex (UV-damaged DNA-binding protein complex), a complex that recognizes UV-induced DNA damage and recruit proteins of the nucleotide excision repair pathway (the NER pathway) to initiate DNA repair. The UV-DDB complex preferentially binds to cyclobutane pyrimidine dimers (CPD), 6-4 photoproducts (6-4 PP), apurinic sites and short mismatches. Also functions as a component of numerous distinct DCX (DDB1-CUL4-X-box) E3 ubiquitin-protein ligase complexes which mediate the ubiquitination and subsequent proteasomal degradation of target proteins. The functional specificity of the DCX E3 ubiquitin-protein ligase complex is determined by the variable substrate recognition component recruited by DDB1. DCX(DDB2) (also known as DDB1-CUL4-ROC1, CUL4-DDB-ROC1 and CUL4-DDB-RBX1) may ubiquitinate histone H2A, histone H3 and histone H4 at sites of UV-induced DNA damage. The ubiquitination of histones may facilitate their removal from the nucleosome and promote subsequent DNA repair. DCX(DDB2) also ubiquitinates XPC, which may enhance DNA-binding by XPC and promote NER. DCX(DTL) plays a role in PCNA-dependent polyubiquitination of CDT1 and MDM2-dependent ubiquitination of TP53 in response to radiation-induced DNA damage and during DNA replication. DCX(ERCC8) (the CSA complex) plays a role in transcription-coupled repair (TCR). The DDB1-CUL4A-DTL E3 ligase complex regulates the circadian clock function by mediating the ubiquitination and degradation of CRY1 (By similarity). DDB1-mediated CRY1 degradation promotes FOXO1 protein stability and FOXO1-mediated gluconeogenesis in the liver (By similarity). By acting on TET dioxygenses, essential for oocyte maintenance at the primordial follicle stage, hence essential for female fertility (By similarity). Maternal factor required for proper zygotic genome activation and genome reprogramming (By similarity).</text>
</comment>
<comment type="pathway">
    <text evidence="2">Protein modification; protein ubiquitination.</text>
</comment>
<comment type="subunit">
    <text evidence="2 3">Component of the UV-DDB complex which includes DDB1 and DDB2; the heterodimer dimerizes to give rise to a heterotetramer when bound to damaged DNA. The UV-DDB complex interacts with monoubiquitinated histone H2A and binds to XPC via the DDB2 subunit. Component of numerous DCX (DDB1-CUL4-X-box) E3 ubiquitin-protein ligase complexes which consist of a core of DDB1, CUL4A or CUL4B and RBX1. DDB1 may recruit specific substrate targeting subunits to the DCX complex. These substrate targeting subunits are generally known as DCAF (DDB1- and CUL4-associated factor) or CDW (CUL4-DDB1-associated WD40-repeat) proteins. Interacts with AMBRA1, ATG16L1, BTRC, CRBN, DCAF1, DCAF4, DCAF5, DCAF6, DCAF7, DCAF8, DCAF9, DCAF10, DCAF11, DCAF12, DCAF15, DCAF16, DCAF17, DDA1, DET1, DTL, ERCC8, FBXW5, FBXW8, GRWD1, KATNB1, NLE1, NUP43, PAFAH1B1, PHIP, PWP1, RBBP4, RBBP5, RBBP7, COP1, SNRNP40, DCAF1, WDR5, WDR5B, WDR12, WDR26, WDR39, WDR42, WDR53, WDR59, WDR61, WSB1, WSB2, LRWD1 and WDTC1. DCX complexes may associate with the COP9 signalosome, and this inhibits the E3 ubiquitin-protein ligase activity of the complex. Interacts with NF2, TSC1 and TSC2. Interacts with AGO1 and AGO2. Associates with the E3 ligase complex containing DYRK2, EDD/UBR5, DDB1 and DCAF1 proteins (EDVP complex). Interacts directly with DYRK2. DCX(DTL) complex interacts with FBXO11; does not ubiquitinate and degradate FBXO11. Interacts with TRPC4AP (By similarity). Interacts with CRY1 and CRY2 (By similarity). The DDB1-CUL4A complex interacts with CRY1 (By similarity). May also interact with DCUN1D1, DCUN1D2, DCUN1D3 and DCUN1D5 (By similarity). Component of the DCX(DCAF13) E3 ubiquitin ligase complex, at least composed of CUL4 (CUL4A or CUL4B), DDB1, DCAF13 and RBX1. Interacts with DCAF13 (via WD40 domain) (By similarity).</text>
</comment>
<comment type="interaction">
    <interactant intactId="EBI-11296420">
        <id>A1A4K3</id>
    </interactant>
    <interactant intactId="EBI-11301368">
        <id>P30021</id>
        <label>UL47</label>
    </interactant>
    <organismsDiffer>true</organismsDiffer>
    <experiments>7</experiments>
</comment>
<comment type="subcellular location">
    <subcellularLocation>
        <location evidence="2">Cytoplasm</location>
    </subcellularLocation>
    <subcellularLocation>
        <location evidence="2">Nucleus</location>
    </subcellularLocation>
    <text evidence="2 3">Primarily cytoplasmic. Translocates to the nucleus following UV irradiation and subsequently accumulates at sites of DNA damage. More concentrated in nuclei than in cytoplasm in germinal vesicle (GV) stage oocytes, zygotes and the 2-cell stage, but distributed in the cytoplasm at the MII-stage oocytes (By similarity).</text>
</comment>
<comment type="domain">
    <text evidence="2">The core of the protein consists of three WD40 beta-propeller domains.</text>
</comment>
<comment type="PTM">
    <text evidence="3">Phosphorylated by ABL1.</text>
</comment>
<comment type="PTM">
    <text evidence="2">Ubiquitinated by CUL4A. Subsequently degraded by ubiquitin-dependent proteolysis.</text>
</comment>
<comment type="PTM">
    <text evidence="2">Acetylated, promoting interaction with CUL4 (CUL4A or CUL4B) and subsequent formation of DCX (DDB1-CUL4-X-box) E3 ubiquitin-protein ligase complexes. Deacetylation by SIRT7 impairs the interaction with CUL4 (CUL4A or CUL4B) and formation of DCX (DDB1-CUL4-X-box) E3 ubiquitin-protein ligase complexes.</text>
</comment>
<comment type="similarity">
    <text evidence="5">Belongs to the DDB1 family.</text>
</comment>
<protein>
    <recommendedName>
        <fullName>DNA damage-binding protein 1</fullName>
    </recommendedName>
    <alternativeName>
        <fullName>Damage-specific DNA-binding protein 1</fullName>
    </alternativeName>
</protein>
<organism>
    <name type="scientific">Bos taurus</name>
    <name type="common">Bovine</name>
    <dbReference type="NCBI Taxonomy" id="9913"/>
    <lineage>
        <taxon>Eukaryota</taxon>
        <taxon>Metazoa</taxon>
        <taxon>Chordata</taxon>
        <taxon>Craniata</taxon>
        <taxon>Vertebrata</taxon>
        <taxon>Euteleostomi</taxon>
        <taxon>Mammalia</taxon>
        <taxon>Eutheria</taxon>
        <taxon>Laurasiatheria</taxon>
        <taxon>Artiodactyla</taxon>
        <taxon>Ruminantia</taxon>
        <taxon>Pecora</taxon>
        <taxon>Bovidae</taxon>
        <taxon>Bovinae</taxon>
        <taxon>Bos</taxon>
    </lineage>
</organism>
<proteinExistence type="evidence at protein level"/>
<sequence>MSYNYVVTAQKPTAVNGCVTGHFTSAEDLNLLIAKNTRLEIYVVTAEGLRPVKEVGMYGKIAVMELFRPKGESKDLLFILTAKYNACILEYKQSGESIDIITRAHGNVQDRIGRPSETGIIGIIDPECRMIGLRLYDGLFKVIPLDRDNKELKAFNIRLEELHVIDVKFLYGCQAPTICFVYQDPQGRHVKTYEVSLREKEFNKGPWKQENVEAEASMVIAVPEPFGGAIIIGQESITYHNGDKYLAIAPPIIKQSTIVCHNRVDPNGSRYLLGDMEGRLFMLLLEKEEQMDGTVTLKDLRVELLGETSIAECLTYLDNGVVFVGSRLGDSQLVKLNVDSNEQGSYVVAMETFTNLGPIVDMCVVDLERQGQGQLVTCSGAFKEGSLRIIRNGIGIHEHASIDLPGIKGLWPLRSDPNRETDDTLVLSFVGQTRVLMLNGEEVEETELMGFVDDQQTFFCGNVAHQQLIQITSASVRLVSQEPKALVSEWKEPQGKNISVASCNSSQVVVAVGRALYYLQIHPQELRQISHTEMEHEVACLDITPLGDSNGMSPLCAIGLWTDISARIAKLPSFELLHKEMLGGEIIPRSILMTTFESSHYLLCALGDGALFYFGLNIETGLLSDRKKVTLGTQPTVLRTFRSLSTTNVFACSDRPTVIYSSNHKLVFSNVNLKEVNYMCPLNSDGYPDSLALANNSTLTIGTIDEIQKLHIRTVPLYESPRKICYQEVSQCFGVLSSRIEVQDTSGGTTALRPSASTQALSSSVSSSKLFSSSTAPHETSFGEEVEVHNLLIIDQHTFEVLHAHQFLQNEYALSLVSCKLGKDPNTYFIVGTAMVYPEEAEPKQGRIVVFQYSDGKLQTVAEKEVKGAVYSMVEFNGKLLASINSTVRLYEWTTEKELRTECNHYNNIMALYLKTKGDFILVGDLMRSVLLLAYKPMEGNFEEIARDFNPNWMSAVEILDDDNFLGAENAFNLFVCQKDSAATTDEERQHLQEVGLFHLGEFVNVFCHGSLVMQNLGETSTPTQGSVLFGTVNGMIGLVTSLSESWYNLLLDMQNRLNKVIKSVGKIEHSFWRSFHTERKTEPATGFIDGDLIESFLDISRPKMQEVVANLQYDDGSGMKREATADDLIKVVEELTRIH</sequence>
<feature type="initiator methionine" description="Removed" evidence="2">
    <location>
        <position position="1"/>
    </location>
</feature>
<feature type="chain" id="PRO_0000281035" description="DNA damage-binding protein 1">
    <location>
        <begin position="2"/>
        <end position="1140"/>
    </location>
</feature>
<feature type="region of interest" description="Interaction with CDT1" evidence="1">
    <location>
        <begin position="2"/>
        <end position="768"/>
    </location>
</feature>
<feature type="region of interest" description="WD repeat beta-propeller A" evidence="1">
    <location>
        <begin position="13"/>
        <end position="356"/>
    </location>
</feature>
<feature type="region of interest" description="WD repeat beta-propeller B; Interaction with CUL4A" evidence="1">
    <location>
        <begin position="391"/>
        <end position="708"/>
    </location>
</feature>
<feature type="region of interest" description="WD repeat beta-propeller C" evidence="1">
    <location>
        <begin position="709"/>
        <end position="1043"/>
    </location>
</feature>
<feature type="region of interest" description="Interaction with CDT1 and CUL4A" evidence="1">
    <location>
        <begin position="771"/>
        <end position="1140"/>
    </location>
</feature>
<feature type="modified residue" description="N-acetylserine" evidence="2">
    <location>
        <position position="2"/>
    </location>
</feature>
<feature type="modified residue" description="N6-acetyllysine" evidence="2">
    <location>
        <position position="1067"/>
    </location>
</feature>
<feature type="modified residue" description="Phosphothreonine" evidence="4">
    <location>
        <position position="1125"/>
    </location>
</feature>
<feature type="cross-link" description="Glycyl lysine isopeptide (Lys-Gly) (interchain with G-Cter in SUMO2)" evidence="2">
    <location>
        <position position="1121"/>
    </location>
</feature>
<accession>A1A4K3</accession>
<reference key="1">
    <citation type="submission" date="2006-10" db="EMBL/GenBank/DDBJ databases">
        <authorList>
            <consortium name="NIH - Mammalian Gene Collection (MGC) project"/>
        </authorList>
    </citation>
    <scope>NUCLEOTIDE SEQUENCE [LARGE SCALE MRNA]</scope>
    <source>
        <strain>Hereford</strain>
        <tissue>Fetal muscle</tissue>
    </source>
</reference>